<sequence length="405" mass="45883">MTVDRQALGFGYGEHAAYASNPWASRGRLYPEASSPTRSDFQRDRDRIVHTTAFRRLKHKTQVFIAADGDHYRTRLTHTIEVAQIARALARALKLDEDLAEGVALVHDFGHTPFGHTGEDALHEVLEPYGGFDHNAQSLRIVTKLERRYAEFDGLNLTWESLEGLVKHNGPLMTADGQGLRGPVPQPILDYCALHDLELASFASLEAQVAAIADDIAYNTHDIDDGLRAGYLTFEMLEEIPFLARLMREVHDRYPGLESSRFTHEIMRRQITAMVEDVIAVAQKRLGEVRPESAKDVRCAGRVMATFSDEMSETDRQIKNLLMTRIYRHPEVMRVRQGAASIVTDLYRAFMDDPSLMKEHYWIDQIAGMAEPARARHVGDYLAGMTDTFAISVHRRLFDHTPDLR</sequence>
<keyword id="KW-0378">Hydrolase</keyword>
<keyword id="KW-1185">Reference proteome</keyword>
<name>DGTL1_RHIME</name>
<gene>
    <name type="ordered locus">R01522</name>
    <name type="ORF">SMc02074</name>
</gene>
<accession>Q92Q32</accession>
<protein>
    <recommendedName>
        <fullName evidence="1">Deoxyguanosinetriphosphate triphosphohydrolase-like protein</fullName>
    </recommendedName>
</protein>
<evidence type="ECO:0000255" key="1">
    <source>
        <dbReference type="HAMAP-Rule" id="MF_01212"/>
    </source>
</evidence>
<evidence type="ECO:0000255" key="2">
    <source>
        <dbReference type="PROSITE-ProRule" id="PRU01175"/>
    </source>
</evidence>
<dbReference type="EMBL" id="AL591688">
    <property type="protein sequence ID" value="CAC46101.1"/>
    <property type="molecule type" value="Genomic_DNA"/>
</dbReference>
<dbReference type="RefSeq" id="NP_385628.1">
    <property type="nucleotide sequence ID" value="NC_003047.1"/>
</dbReference>
<dbReference type="RefSeq" id="WP_003534550.1">
    <property type="nucleotide sequence ID" value="NC_003047.1"/>
</dbReference>
<dbReference type="SMR" id="Q92Q32"/>
<dbReference type="EnsemblBacteria" id="CAC46101">
    <property type="protein sequence ID" value="CAC46101"/>
    <property type="gene ID" value="SMc02074"/>
</dbReference>
<dbReference type="KEGG" id="sme:SMc02074"/>
<dbReference type="PATRIC" id="fig|266834.11.peg.2945"/>
<dbReference type="eggNOG" id="COG0232">
    <property type="taxonomic scope" value="Bacteria"/>
</dbReference>
<dbReference type="HOGENOM" id="CLU_028163_1_0_5"/>
<dbReference type="OrthoDB" id="9803619at2"/>
<dbReference type="Proteomes" id="UP000001976">
    <property type="component" value="Chromosome"/>
</dbReference>
<dbReference type="GO" id="GO:0016793">
    <property type="term" value="F:triphosphoric monoester hydrolase activity"/>
    <property type="evidence" value="ECO:0007669"/>
    <property type="project" value="InterPro"/>
</dbReference>
<dbReference type="CDD" id="cd00077">
    <property type="entry name" value="HDc"/>
    <property type="match status" value="1"/>
</dbReference>
<dbReference type="Gene3D" id="1.10.3210.10">
    <property type="entry name" value="Hypothetical protein af1432"/>
    <property type="match status" value="1"/>
</dbReference>
<dbReference type="HAMAP" id="MF_01212">
    <property type="entry name" value="dGTPase_type2"/>
    <property type="match status" value="1"/>
</dbReference>
<dbReference type="InterPro" id="IPR006261">
    <property type="entry name" value="dGTPase"/>
</dbReference>
<dbReference type="InterPro" id="IPR051094">
    <property type="entry name" value="Diverse_Catalytic_Enzymes"/>
</dbReference>
<dbReference type="InterPro" id="IPR023023">
    <property type="entry name" value="dNTPase_2"/>
</dbReference>
<dbReference type="InterPro" id="IPR003607">
    <property type="entry name" value="HD/PDEase_dom"/>
</dbReference>
<dbReference type="InterPro" id="IPR006674">
    <property type="entry name" value="HD_domain"/>
</dbReference>
<dbReference type="InterPro" id="IPR026875">
    <property type="entry name" value="PHydrolase_assoc_dom"/>
</dbReference>
<dbReference type="NCBIfam" id="TIGR01353">
    <property type="entry name" value="dGTP_triPase"/>
    <property type="match status" value="1"/>
</dbReference>
<dbReference type="NCBIfam" id="NF002326">
    <property type="entry name" value="PRK01286.1-1"/>
    <property type="match status" value="1"/>
</dbReference>
<dbReference type="NCBIfam" id="NF002328">
    <property type="entry name" value="PRK01286.1-3"/>
    <property type="match status" value="1"/>
</dbReference>
<dbReference type="PANTHER" id="PTHR35795:SF1">
    <property type="entry name" value="BIS(5'-NUCLEOSYL)-TETRAPHOSPHATASE, SYMMETRICAL"/>
    <property type="match status" value="1"/>
</dbReference>
<dbReference type="PANTHER" id="PTHR35795">
    <property type="entry name" value="SLR1885 PROTEIN"/>
    <property type="match status" value="1"/>
</dbReference>
<dbReference type="Pfam" id="PF01966">
    <property type="entry name" value="HD"/>
    <property type="match status" value="1"/>
</dbReference>
<dbReference type="Pfam" id="PF13286">
    <property type="entry name" value="HD_assoc"/>
    <property type="match status" value="1"/>
</dbReference>
<dbReference type="SMART" id="SM00471">
    <property type="entry name" value="HDc"/>
    <property type="match status" value="1"/>
</dbReference>
<dbReference type="SUPFAM" id="SSF109604">
    <property type="entry name" value="HD-domain/PDEase-like"/>
    <property type="match status" value="1"/>
</dbReference>
<dbReference type="PROSITE" id="PS51831">
    <property type="entry name" value="HD"/>
    <property type="match status" value="1"/>
</dbReference>
<reference key="1">
    <citation type="journal article" date="2001" name="Proc. Natl. Acad. Sci. U.S.A.">
        <title>Analysis of the chromosome sequence of the legume symbiont Sinorhizobium meliloti strain 1021.</title>
        <authorList>
            <person name="Capela D."/>
            <person name="Barloy-Hubler F."/>
            <person name="Gouzy J."/>
            <person name="Bothe G."/>
            <person name="Ampe F."/>
            <person name="Batut J."/>
            <person name="Boistard P."/>
            <person name="Becker A."/>
            <person name="Boutry M."/>
            <person name="Cadieu E."/>
            <person name="Dreano S."/>
            <person name="Gloux S."/>
            <person name="Godrie T."/>
            <person name="Goffeau A."/>
            <person name="Kahn D."/>
            <person name="Kiss E."/>
            <person name="Lelaure V."/>
            <person name="Masuy D."/>
            <person name="Pohl T."/>
            <person name="Portetelle D."/>
            <person name="Puehler A."/>
            <person name="Purnelle B."/>
            <person name="Ramsperger U."/>
            <person name="Renard C."/>
            <person name="Thebault P."/>
            <person name="Vandenbol M."/>
            <person name="Weidner S."/>
            <person name="Galibert F."/>
        </authorList>
    </citation>
    <scope>NUCLEOTIDE SEQUENCE [LARGE SCALE GENOMIC DNA]</scope>
    <source>
        <strain>1021</strain>
    </source>
</reference>
<reference key="2">
    <citation type="journal article" date="2001" name="Science">
        <title>The composite genome of the legume symbiont Sinorhizobium meliloti.</title>
        <authorList>
            <person name="Galibert F."/>
            <person name="Finan T.M."/>
            <person name="Long S.R."/>
            <person name="Puehler A."/>
            <person name="Abola P."/>
            <person name="Ampe F."/>
            <person name="Barloy-Hubler F."/>
            <person name="Barnett M.J."/>
            <person name="Becker A."/>
            <person name="Boistard P."/>
            <person name="Bothe G."/>
            <person name="Boutry M."/>
            <person name="Bowser L."/>
            <person name="Buhrmester J."/>
            <person name="Cadieu E."/>
            <person name="Capela D."/>
            <person name="Chain P."/>
            <person name="Cowie A."/>
            <person name="Davis R.W."/>
            <person name="Dreano S."/>
            <person name="Federspiel N.A."/>
            <person name="Fisher R.F."/>
            <person name="Gloux S."/>
            <person name="Godrie T."/>
            <person name="Goffeau A."/>
            <person name="Golding B."/>
            <person name="Gouzy J."/>
            <person name="Gurjal M."/>
            <person name="Hernandez-Lucas I."/>
            <person name="Hong A."/>
            <person name="Huizar L."/>
            <person name="Hyman R.W."/>
            <person name="Jones T."/>
            <person name="Kahn D."/>
            <person name="Kahn M.L."/>
            <person name="Kalman S."/>
            <person name="Keating D.H."/>
            <person name="Kiss E."/>
            <person name="Komp C."/>
            <person name="Lelaure V."/>
            <person name="Masuy D."/>
            <person name="Palm C."/>
            <person name="Peck M.C."/>
            <person name="Pohl T.M."/>
            <person name="Portetelle D."/>
            <person name="Purnelle B."/>
            <person name="Ramsperger U."/>
            <person name="Surzycki R."/>
            <person name="Thebault P."/>
            <person name="Vandenbol M."/>
            <person name="Vorhoelter F.J."/>
            <person name="Weidner S."/>
            <person name="Wells D.H."/>
            <person name="Wong K."/>
            <person name="Yeh K.-C."/>
            <person name="Batut J."/>
        </authorList>
    </citation>
    <scope>NUCLEOTIDE SEQUENCE [LARGE SCALE GENOMIC DNA]</scope>
    <source>
        <strain>1021</strain>
    </source>
</reference>
<organism>
    <name type="scientific">Rhizobium meliloti (strain 1021)</name>
    <name type="common">Ensifer meliloti</name>
    <name type="synonym">Sinorhizobium meliloti</name>
    <dbReference type="NCBI Taxonomy" id="266834"/>
    <lineage>
        <taxon>Bacteria</taxon>
        <taxon>Pseudomonadati</taxon>
        <taxon>Pseudomonadota</taxon>
        <taxon>Alphaproteobacteria</taxon>
        <taxon>Hyphomicrobiales</taxon>
        <taxon>Rhizobiaceae</taxon>
        <taxon>Sinorhizobium/Ensifer group</taxon>
        <taxon>Sinorhizobium</taxon>
    </lineage>
</organism>
<comment type="similarity">
    <text evidence="1">Belongs to the dGTPase family. Type 2 subfamily.</text>
</comment>
<proteinExistence type="inferred from homology"/>
<feature type="chain" id="PRO_0000205316" description="Deoxyguanosinetriphosphate triphosphohydrolase-like protein">
    <location>
        <begin position="1"/>
        <end position="405"/>
    </location>
</feature>
<feature type="domain" description="HD" evidence="2">
    <location>
        <begin position="75"/>
        <end position="219"/>
    </location>
</feature>